<accession>P28149</accession>
<proteinExistence type="inferred from homology"/>
<evidence type="ECO:0000305" key="1"/>
<reference key="1">
    <citation type="journal article" date="1992" name="J. Mol. Biol.">
        <title>Nucleotide sequence and organization of an H2-uptake gene cluster from Rhizobium leguminosarum bv. viciae containing a rubredoxin-like gene and four additional open reading frames.</title>
        <authorList>
            <person name="Rey L."/>
            <person name="Hidalgo E."/>
            <person name="Palacios J.M."/>
            <person name="Ruiz-Argueso T."/>
        </authorList>
    </citation>
    <scope>NUCLEOTIDE SEQUENCE [GENOMIC DNA]</scope>
    <source>
        <strain>128c53</strain>
    </source>
</reference>
<reference key="2">
    <citation type="journal article" date="1997" name="Mol. Plant Microbe Interact.">
        <title>Organization of the hup-region and its differential transcription in non-symbiotic and symbiotic cells of Rhizobium leguminosarum bv. viciae B10.</title>
        <authorList>
            <person name="Brito B."/>
            <person name="Palacios J.M."/>
            <person name="Imperial J."/>
            <person name="Ruiz-Argueso T."/>
            <person name="Yang W.C."/>
            <person name="Bisseling T."/>
            <person name="Schmitt H."/>
            <person name="Kerl V."/>
            <person name="Bauer T."/>
            <person name="Kokotek W."/>
            <person name="Lotz W."/>
        </authorList>
    </citation>
    <scope>NUCLEOTIDE SEQUENCE [GENOMIC DNA]</scope>
    <source>
        <strain>B10</strain>
    </source>
</reference>
<reference key="3">
    <citation type="journal article" date="1992" name="J. Bacteriol.">
        <title>Nucleotide sequence and characterization of four additional genes of the hydrogenase structural operon from Rhizobium leguminosarum bv. viciae.</title>
        <authorList>
            <person name="Hidalgo E."/>
            <person name="Palacios J.M."/>
            <person name="Murillo J."/>
            <person name="Ruiz-Argueso T."/>
        </authorList>
    </citation>
    <scope>NUCLEOTIDE SEQUENCE [GENOMIC DNA] OF 1-18</scope>
    <source>
        <strain>128c53</strain>
    </source>
</reference>
<feature type="chain" id="PRO_0000201412" description="Hydrogenase expression/formation protein HupG">
    <location>
        <begin position="1"/>
        <end position="149"/>
    </location>
</feature>
<organism>
    <name type="scientific">Rhizobium leguminosarum bv. viciae</name>
    <dbReference type="NCBI Taxonomy" id="387"/>
    <lineage>
        <taxon>Bacteria</taxon>
        <taxon>Pseudomonadati</taxon>
        <taxon>Pseudomonadota</taxon>
        <taxon>Alphaproteobacteria</taxon>
        <taxon>Hyphomicrobiales</taxon>
        <taxon>Rhizobiaceae</taxon>
        <taxon>Rhizobium/Agrobacterium group</taxon>
        <taxon>Rhizobium</taxon>
    </lineage>
</organism>
<protein>
    <recommendedName>
        <fullName>Hydrogenase expression/formation protein HupG</fullName>
    </recommendedName>
</protein>
<dbReference type="EMBL" id="X52974">
    <property type="protein sequence ID" value="CAA37154.1"/>
    <property type="molecule type" value="Genomic_DNA"/>
</dbReference>
<dbReference type="EMBL" id="Z36981">
    <property type="protein sequence ID" value="CAA85436.1"/>
    <property type="molecule type" value="Genomic_DNA"/>
</dbReference>
<dbReference type="PIR" id="S27341">
    <property type="entry name" value="E41892"/>
</dbReference>
<dbReference type="RefSeq" id="WP_018517051.1">
    <property type="nucleotide sequence ID" value="NZ_SJNH01000008.1"/>
</dbReference>
<dbReference type="SMR" id="P28149"/>
<dbReference type="CDD" id="cd02965">
    <property type="entry name" value="HyaE"/>
    <property type="match status" value="1"/>
</dbReference>
<dbReference type="Gene3D" id="3.40.30.10">
    <property type="entry name" value="Glutaredoxin"/>
    <property type="match status" value="1"/>
</dbReference>
<dbReference type="InterPro" id="IPR010893">
    <property type="entry name" value="NiFe-hyd_mat_HyaE"/>
</dbReference>
<dbReference type="InterPro" id="IPR036249">
    <property type="entry name" value="Thioredoxin-like_sf"/>
</dbReference>
<dbReference type="Pfam" id="PF07449">
    <property type="entry name" value="HyaE"/>
    <property type="match status" value="1"/>
</dbReference>
<dbReference type="PIRSF" id="PIRSF038934">
    <property type="entry name" value="HyaE_HupG"/>
    <property type="match status" value="1"/>
</dbReference>
<dbReference type="SUPFAM" id="SSF52833">
    <property type="entry name" value="Thioredoxin-like"/>
    <property type="match status" value="1"/>
</dbReference>
<comment type="similarity">
    <text evidence="1">Belongs to the HupG/HyaE family.</text>
</comment>
<name>HUPG_RHILV</name>
<sequence>MPSALVRALNERAHLPVVDETNIDAFLAPAAGEPDNAVLFFTGDPAQRPEADDVAVVLPELMQVFRGRLRGAVVRRATEDKLKARFNVVVMPSLVVTRRDQPVGVLGKIRDWSEYVEKISAWLSPDVPVMVSSGGPKVEITHAGKEIAR</sequence>
<gene>
    <name type="primary">hupG</name>
</gene>